<sequence length="306" mass="35245">MPIKIPDDLPATSVLEAEGVMVMREADAVRQDIRPLRIGLLNLMPNKVTTETQIARLLGATPLQVELTLVRMTNHVARHTPADHMLSFYCPWEEVNDQRFDGFVITGAPVERLPFEEVTYWDEMRRVFDWTQSHVHRTLNICWAAQAAVYHFHGMKKYDLPAKASGVFRQRSLVPASPYLRGFSDDFAIPVSRWTEVRKSDIPADSGLKVLVDSTETGLCLLDDPRHRSLHMFNHVEYDTTSLADEYFRDIQVQPEAKVPVNYFPGDDAKRPPENRWRSHAHLLFGNWINEMYQSTPYDIERIGKV</sequence>
<keyword id="KW-0012">Acyltransferase</keyword>
<keyword id="KW-0028">Amino-acid biosynthesis</keyword>
<keyword id="KW-0963">Cytoplasm</keyword>
<keyword id="KW-0486">Methionine biosynthesis</keyword>
<keyword id="KW-0808">Transferase</keyword>
<evidence type="ECO:0000255" key="1">
    <source>
        <dbReference type="HAMAP-Rule" id="MF_00295"/>
    </source>
</evidence>
<comment type="function">
    <text evidence="1">Transfers an acetyl group from acetyl-CoA to L-homoserine, forming acetyl-L-homoserine.</text>
</comment>
<comment type="catalytic activity">
    <reaction evidence="1">
        <text>L-homoserine + acetyl-CoA = O-acetyl-L-homoserine + CoA</text>
        <dbReference type="Rhea" id="RHEA:13701"/>
        <dbReference type="ChEBI" id="CHEBI:57287"/>
        <dbReference type="ChEBI" id="CHEBI:57288"/>
        <dbReference type="ChEBI" id="CHEBI:57476"/>
        <dbReference type="ChEBI" id="CHEBI:57716"/>
        <dbReference type="EC" id="2.3.1.31"/>
    </reaction>
</comment>
<comment type="pathway">
    <text evidence="1">Amino-acid biosynthesis; L-methionine biosynthesis via de novo pathway; O-acetyl-L-homoserine from L-homoserine: step 1/1.</text>
</comment>
<comment type="subcellular location">
    <subcellularLocation>
        <location evidence="1">Cytoplasm</location>
    </subcellularLocation>
</comment>
<comment type="similarity">
    <text evidence="1">Belongs to the MetA family.</text>
</comment>
<feature type="chain" id="PRO_0000199744" description="Homoserine O-acetyltransferase">
    <location>
        <begin position="1"/>
        <end position="306"/>
    </location>
</feature>
<feature type="active site" description="Acyl-thioester intermediate" evidence="1">
    <location>
        <position position="142"/>
    </location>
</feature>
<feature type="active site" description="Proton acceptor" evidence="1">
    <location>
        <position position="235"/>
    </location>
</feature>
<feature type="active site" evidence="1">
    <location>
        <position position="237"/>
    </location>
</feature>
<feature type="binding site" evidence="1">
    <location>
        <position position="163"/>
    </location>
    <ligand>
        <name>substrate</name>
    </ligand>
</feature>
<feature type="binding site" evidence="1">
    <location>
        <position position="192"/>
    </location>
    <ligand>
        <name>substrate</name>
    </ligand>
</feature>
<feature type="binding site" evidence="1">
    <location>
        <position position="249"/>
    </location>
    <ligand>
        <name>substrate</name>
    </ligand>
</feature>
<feature type="site" description="Important for acyl-CoA specificity" evidence="1">
    <location>
        <position position="111"/>
    </location>
</feature>
<feature type="site" description="Important for substrate specificity" evidence="1">
    <location>
        <position position="192"/>
    </location>
</feature>
<protein>
    <recommendedName>
        <fullName evidence="1">Homoserine O-acetyltransferase</fullName>
        <shortName evidence="1">HAT</shortName>
        <ecNumber evidence="1">2.3.1.31</ecNumber>
    </recommendedName>
    <alternativeName>
        <fullName evidence="1">Homoserine transacetylase</fullName>
        <shortName evidence="1">HTA</shortName>
    </alternativeName>
</protein>
<reference key="1">
    <citation type="journal article" date="2002" name="Proc. Natl. Acad. Sci. U.S.A.">
        <title>The Brucella suis genome reveals fundamental similarities between animal and plant pathogens and symbionts.</title>
        <authorList>
            <person name="Paulsen I.T."/>
            <person name="Seshadri R."/>
            <person name="Nelson K.E."/>
            <person name="Eisen J.A."/>
            <person name="Heidelberg J.F."/>
            <person name="Read T.D."/>
            <person name="Dodson R.J."/>
            <person name="Umayam L.A."/>
            <person name="Brinkac L.M."/>
            <person name="Beanan M.J."/>
            <person name="Daugherty S.C."/>
            <person name="DeBoy R.T."/>
            <person name="Durkin A.S."/>
            <person name="Kolonay J.F."/>
            <person name="Madupu R."/>
            <person name="Nelson W.C."/>
            <person name="Ayodeji B."/>
            <person name="Kraul M."/>
            <person name="Shetty J."/>
            <person name="Malek J.A."/>
            <person name="Van Aken S.E."/>
            <person name="Riedmuller S."/>
            <person name="Tettelin H."/>
            <person name="Gill S.R."/>
            <person name="White O."/>
            <person name="Salzberg S.L."/>
            <person name="Hoover D.L."/>
            <person name="Lindler L.E."/>
            <person name="Halling S.M."/>
            <person name="Boyle S.M."/>
            <person name="Fraser C.M."/>
        </authorList>
    </citation>
    <scope>NUCLEOTIDE SEQUENCE [LARGE SCALE GENOMIC DNA]</scope>
    <source>
        <strain>1330</strain>
    </source>
</reference>
<reference key="2">
    <citation type="journal article" date="2011" name="J. Bacteriol.">
        <title>Revised genome sequence of Brucella suis 1330.</title>
        <authorList>
            <person name="Tae H."/>
            <person name="Shallom S."/>
            <person name="Settlage R."/>
            <person name="Preston D."/>
            <person name="Adams L.G."/>
            <person name="Garner H.R."/>
        </authorList>
    </citation>
    <scope>NUCLEOTIDE SEQUENCE [LARGE SCALE GENOMIC DNA]</scope>
    <source>
        <strain>1330</strain>
    </source>
</reference>
<organism>
    <name type="scientific">Brucella suis biovar 1 (strain 1330)</name>
    <dbReference type="NCBI Taxonomy" id="204722"/>
    <lineage>
        <taxon>Bacteria</taxon>
        <taxon>Pseudomonadati</taxon>
        <taxon>Pseudomonadota</taxon>
        <taxon>Alphaproteobacteria</taxon>
        <taxon>Hyphomicrobiales</taxon>
        <taxon>Brucellaceae</taxon>
        <taxon>Brucella/Ochrobactrum group</taxon>
        <taxon>Brucella</taxon>
    </lineage>
</organism>
<name>METAA_BRUSU</name>
<accession>Q8FWG9</accession>
<accession>G0KCL8</accession>
<dbReference type="EC" id="2.3.1.31" evidence="1"/>
<dbReference type="EMBL" id="AE014292">
    <property type="protein sequence ID" value="AAN33678.1"/>
    <property type="molecule type" value="Genomic_DNA"/>
</dbReference>
<dbReference type="EMBL" id="CP002998">
    <property type="protein sequence ID" value="AEM19956.1"/>
    <property type="molecule type" value="Genomic_DNA"/>
</dbReference>
<dbReference type="SMR" id="Q8FWG9"/>
<dbReference type="KEGG" id="bms:BRA0486"/>
<dbReference type="KEGG" id="bsi:BS1330_II0482"/>
<dbReference type="PATRIC" id="fig|204722.21.peg.3674"/>
<dbReference type="HOGENOM" id="CLU_057851_0_1_5"/>
<dbReference type="PhylomeDB" id="Q8FWG9"/>
<dbReference type="UniPathway" id="UPA00051">
    <property type="reaction ID" value="UER00074"/>
</dbReference>
<dbReference type="Proteomes" id="UP000007104">
    <property type="component" value="Chromosome II"/>
</dbReference>
<dbReference type="GO" id="GO:0005737">
    <property type="term" value="C:cytoplasm"/>
    <property type="evidence" value="ECO:0007669"/>
    <property type="project" value="UniProtKB-SubCell"/>
</dbReference>
<dbReference type="GO" id="GO:0004414">
    <property type="term" value="F:homoserine O-acetyltransferase activity"/>
    <property type="evidence" value="ECO:0007669"/>
    <property type="project" value="UniProtKB-EC"/>
</dbReference>
<dbReference type="GO" id="GO:0008899">
    <property type="term" value="F:homoserine O-succinyltransferase activity"/>
    <property type="evidence" value="ECO:0007669"/>
    <property type="project" value="UniProtKB-UniRule"/>
</dbReference>
<dbReference type="GO" id="GO:0019281">
    <property type="term" value="P:L-methionine biosynthetic process from homoserine via O-succinyl-L-homoserine and cystathionine"/>
    <property type="evidence" value="ECO:0007669"/>
    <property type="project" value="InterPro"/>
</dbReference>
<dbReference type="CDD" id="cd03131">
    <property type="entry name" value="GATase1_HTS"/>
    <property type="match status" value="1"/>
</dbReference>
<dbReference type="Gene3D" id="3.40.50.880">
    <property type="match status" value="1"/>
</dbReference>
<dbReference type="HAMAP" id="MF_00295">
    <property type="entry name" value="MetA_acyltransf"/>
    <property type="match status" value="1"/>
</dbReference>
<dbReference type="InterPro" id="IPR029062">
    <property type="entry name" value="Class_I_gatase-like"/>
</dbReference>
<dbReference type="InterPro" id="IPR005697">
    <property type="entry name" value="HST_MetA"/>
</dbReference>
<dbReference type="InterPro" id="IPR033752">
    <property type="entry name" value="MetA_family"/>
</dbReference>
<dbReference type="NCBIfam" id="TIGR01001">
    <property type="entry name" value="metA"/>
    <property type="match status" value="1"/>
</dbReference>
<dbReference type="PANTHER" id="PTHR20919">
    <property type="entry name" value="HOMOSERINE O-SUCCINYLTRANSFERASE"/>
    <property type="match status" value="1"/>
</dbReference>
<dbReference type="PANTHER" id="PTHR20919:SF0">
    <property type="entry name" value="HOMOSERINE O-SUCCINYLTRANSFERASE"/>
    <property type="match status" value="1"/>
</dbReference>
<dbReference type="Pfam" id="PF04204">
    <property type="entry name" value="HTS"/>
    <property type="match status" value="1"/>
</dbReference>
<dbReference type="PIRSF" id="PIRSF000450">
    <property type="entry name" value="H_ser_succinyltr"/>
    <property type="match status" value="1"/>
</dbReference>
<dbReference type="SUPFAM" id="SSF52317">
    <property type="entry name" value="Class I glutamine amidotransferase-like"/>
    <property type="match status" value="1"/>
</dbReference>
<proteinExistence type="inferred from homology"/>
<gene>
    <name evidence="1" type="primary">metAA</name>
    <name type="ordered locus">BRA0486</name>
    <name type="ordered locus">BS1330_II0482</name>
</gene>